<feature type="chain" id="PRO_0000115223" description="Endonuclease MutS2">
    <location>
        <begin position="1"/>
        <end position="762"/>
    </location>
</feature>
<feature type="domain" description="Smr" evidence="1">
    <location>
        <begin position="688"/>
        <end position="762"/>
    </location>
</feature>
<feature type="binding site" evidence="1">
    <location>
        <begin position="333"/>
        <end position="340"/>
    </location>
    <ligand>
        <name>ATP</name>
        <dbReference type="ChEBI" id="CHEBI:30616"/>
    </ligand>
</feature>
<evidence type="ECO:0000255" key="1">
    <source>
        <dbReference type="HAMAP-Rule" id="MF_00092"/>
    </source>
</evidence>
<comment type="function">
    <text evidence="1">Endonuclease that is involved in the suppression of homologous recombination and thus may have a key role in the control of bacterial genetic diversity.</text>
</comment>
<comment type="function">
    <text evidence="1">Acts as a ribosome collision sensor, splitting the ribosome into its 2 subunits. Detects stalled/collided 70S ribosomes which it binds and splits by an ATP-hydrolysis driven conformational change. Acts upstream of the ribosome quality control system (RQC), a ribosome-associated complex that mediates the extraction of incompletely synthesized nascent chains from stalled ribosomes and their subsequent degradation. Probably generates substrates for RQC.</text>
</comment>
<comment type="subunit">
    <text evidence="1">Homodimer. Binds to stalled ribosomes, contacting rRNA.</text>
</comment>
<comment type="similarity">
    <text evidence="1">Belongs to the DNA mismatch repair MutS family. MutS2 subfamily.</text>
</comment>
<accession>Q9ZLL4</accession>
<dbReference type="EC" id="3.1.-.-" evidence="1"/>
<dbReference type="EC" id="3.6.4.-" evidence="1"/>
<dbReference type="EMBL" id="AE001439">
    <property type="protein sequence ID" value="AAD06136.1"/>
    <property type="molecule type" value="Genomic_DNA"/>
</dbReference>
<dbReference type="PIR" id="H71916">
    <property type="entry name" value="H71916"/>
</dbReference>
<dbReference type="SMR" id="Q9ZLL4"/>
<dbReference type="KEGG" id="hpj:jhp_0565"/>
<dbReference type="eggNOG" id="COG1193">
    <property type="taxonomic scope" value="Bacteria"/>
</dbReference>
<dbReference type="Proteomes" id="UP000000804">
    <property type="component" value="Chromosome"/>
</dbReference>
<dbReference type="GO" id="GO:0005524">
    <property type="term" value="F:ATP binding"/>
    <property type="evidence" value="ECO:0007669"/>
    <property type="project" value="UniProtKB-UniRule"/>
</dbReference>
<dbReference type="GO" id="GO:0016887">
    <property type="term" value="F:ATP hydrolysis activity"/>
    <property type="evidence" value="ECO:0007669"/>
    <property type="project" value="InterPro"/>
</dbReference>
<dbReference type="GO" id="GO:0140664">
    <property type="term" value="F:ATP-dependent DNA damage sensor activity"/>
    <property type="evidence" value="ECO:0007669"/>
    <property type="project" value="InterPro"/>
</dbReference>
<dbReference type="GO" id="GO:0004519">
    <property type="term" value="F:endonuclease activity"/>
    <property type="evidence" value="ECO:0007669"/>
    <property type="project" value="UniProtKB-UniRule"/>
</dbReference>
<dbReference type="GO" id="GO:0030983">
    <property type="term" value="F:mismatched DNA binding"/>
    <property type="evidence" value="ECO:0007669"/>
    <property type="project" value="InterPro"/>
</dbReference>
<dbReference type="GO" id="GO:0043023">
    <property type="term" value="F:ribosomal large subunit binding"/>
    <property type="evidence" value="ECO:0007669"/>
    <property type="project" value="UniProtKB-UniRule"/>
</dbReference>
<dbReference type="GO" id="GO:0019843">
    <property type="term" value="F:rRNA binding"/>
    <property type="evidence" value="ECO:0007669"/>
    <property type="project" value="UniProtKB-UniRule"/>
</dbReference>
<dbReference type="GO" id="GO:0006298">
    <property type="term" value="P:mismatch repair"/>
    <property type="evidence" value="ECO:0007669"/>
    <property type="project" value="InterPro"/>
</dbReference>
<dbReference type="GO" id="GO:0045910">
    <property type="term" value="P:negative regulation of DNA recombination"/>
    <property type="evidence" value="ECO:0007669"/>
    <property type="project" value="InterPro"/>
</dbReference>
<dbReference type="GO" id="GO:0072344">
    <property type="term" value="P:rescue of stalled ribosome"/>
    <property type="evidence" value="ECO:0007669"/>
    <property type="project" value="UniProtKB-UniRule"/>
</dbReference>
<dbReference type="FunFam" id="3.30.1370.110:FF:000004">
    <property type="entry name" value="Endonuclease MutS2"/>
    <property type="match status" value="1"/>
</dbReference>
<dbReference type="Gene3D" id="3.30.1370.110">
    <property type="match status" value="1"/>
</dbReference>
<dbReference type="Gene3D" id="3.40.50.300">
    <property type="entry name" value="P-loop containing nucleotide triphosphate hydrolases"/>
    <property type="match status" value="1"/>
</dbReference>
<dbReference type="HAMAP" id="MF_00092">
    <property type="entry name" value="MutS2"/>
    <property type="match status" value="1"/>
</dbReference>
<dbReference type="InterPro" id="IPR000432">
    <property type="entry name" value="DNA_mismatch_repair_MutS_C"/>
</dbReference>
<dbReference type="InterPro" id="IPR007696">
    <property type="entry name" value="DNA_mismatch_repair_MutS_core"/>
</dbReference>
<dbReference type="InterPro" id="IPR036187">
    <property type="entry name" value="DNA_mismatch_repair_MutS_sf"/>
</dbReference>
<dbReference type="InterPro" id="IPR045076">
    <property type="entry name" value="MutS"/>
</dbReference>
<dbReference type="InterPro" id="IPR005747">
    <property type="entry name" value="MutS2"/>
</dbReference>
<dbReference type="InterPro" id="IPR027417">
    <property type="entry name" value="P-loop_NTPase"/>
</dbReference>
<dbReference type="InterPro" id="IPR002625">
    <property type="entry name" value="Smr_dom"/>
</dbReference>
<dbReference type="InterPro" id="IPR036063">
    <property type="entry name" value="Smr_dom_sf"/>
</dbReference>
<dbReference type="NCBIfam" id="TIGR01069">
    <property type="entry name" value="mutS2"/>
    <property type="match status" value="1"/>
</dbReference>
<dbReference type="PANTHER" id="PTHR48466:SF2">
    <property type="entry name" value="OS10G0509000 PROTEIN"/>
    <property type="match status" value="1"/>
</dbReference>
<dbReference type="PANTHER" id="PTHR48466">
    <property type="entry name" value="OS10G0509000 PROTEIN-RELATED"/>
    <property type="match status" value="1"/>
</dbReference>
<dbReference type="Pfam" id="PF00488">
    <property type="entry name" value="MutS_V"/>
    <property type="match status" value="1"/>
</dbReference>
<dbReference type="Pfam" id="PF01713">
    <property type="entry name" value="Smr"/>
    <property type="match status" value="1"/>
</dbReference>
<dbReference type="PIRSF" id="PIRSF005814">
    <property type="entry name" value="MutS_YshD"/>
    <property type="match status" value="1"/>
</dbReference>
<dbReference type="SMART" id="SM00534">
    <property type="entry name" value="MUTSac"/>
    <property type="match status" value="1"/>
</dbReference>
<dbReference type="SMART" id="SM00533">
    <property type="entry name" value="MUTSd"/>
    <property type="match status" value="1"/>
</dbReference>
<dbReference type="SMART" id="SM00463">
    <property type="entry name" value="SMR"/>
    <property type="match status" value="1"/>
</dbReference>
<dbReference type="SUPFAM" id="SSF48334">
    <property type="entry name" value="DNA repair protein MutS, domain III"/>
    <property type="match status" value="1"/>
</dbReference>
<dbReference type="SUPFAM" id="SSF52540">
    <property type="entry name" value="P-loop containing nucleoside triphosphate hydrolases"/>
    <property type="match status" value="1"/>
</dbReference>
<dbReference type="SUPFAM" id="SSF160443">
    <property type="entry name" value="SMR domain-like"/>
    <property type="match status" value="1"/>
</dbReference>
<dbReference type="PROSITE" id="PS50828">
    <property type="entry name" value="SMR"/>
    <property type="match status" value="1"/>
</dbReference>
<organism>
    <name type="scientific">Helicobacter pylori (strain J99 / ATCC 700824)</name>
    <name type="common">Campylobacter pylori J99</name>
    <dbReference type="NCBI Taxonomy" id="85963"/>
    <lineage>
        <taxon>Bacteria</taxon>
        <taxon>Pseudomonadati</taxon>
        <taxon>Campylobacterota</taxon>
        <taxon>Epsilonproteobacteria</taxon>
        <taxon>Campylobacterales</taxon>
        <taxon>Helicobacteraceae</taxon>
        <taxon>Helicobacter</taxon>
    </lineage>
</organism>
<gene>
    <name evidence="1" type="primary">mutS2</name>
    <name type="synonym">mutSB</name>
    <name evidence="1" type="synonym">rqcU</name>
    <name type="ordered locus">jhp_0565</name>
</gene>
<reference key="1">
    <citation type="journal article" date="1999" name="Nature">
        <title>Genomic sequence comparison of two unrelated isolates of the human gastric pathogen Helicobacter pylori.</title>
        <authorList>
            <person name="Alm R.A."/>
            <person name="Ling L.-S.L."/>
            <person name="Moir D.T."/>
            <person name="King B.L."/>
            <person name="Brown E.D."/>
            <person name="Doig P.C."/>
            <person name="Smith D.R."/>
            <person name="Noonan B."/>
            <person name="Guild B.C."/>
            <person name="deJonge B.L."/>
            <person name="Carmel G."/>
            <person name="Tummino P.J."/>
            <person name="Caruso A."/>
            <person name="Uria-Nickelsen M."/>
            <person name="Mills D.M."/>
            <person name="Ives C."/>
            <person name="Gibson R."/>
            <person name="Merberg D."/>
            <person name="Mills S.D."/>
            <person name="Jiang Q."/>
            <person name="Taylor D.E."/>
            <person name="Vovis G.F."/>
            <person name="Trust T.J."/>
        </authorList>
    </citation>
    <scope>NUCLEOTIDE SEQUENCE [LARGE SCALE GENOMIC DNA]</scope>
    <source>
        <strain>J99 / ATCC 700824</strain>
    </source>
</reference>
<protein>
    <recommendedName>
        <fullName evidence="1">Endonuclease MutS2</fullName>
        <ecNumber evidence="1">3.1.-.-</ecNumber>
    </recommendedName>
    <alternativeName>
        <fullName evidence="1">Ribosome-associated protein quality control-upstream factor</fullName>
        <shortName evidence="1">RQC-upstream factor</shortName>
        <shortName evidence="1">RqcU</shortName>
        <ecNumber evidence="1">3.6.4.-</ecNumber>
    </alternativeName>
</protein>
<sequence length="762" mass="86648">MSDASKRSLNPTLMMNNNNTLPKPLEESLDLKEFIALFKTFFAKERGSIALENDLKQAFTYLNEVDAIGLPAPKSVKESDLIVVKLTKLGTLHLDEIYEIVKRLRYIVVLQNAFKPFTHLKFHERLNAIILPPFFNDLILLLDDEGQIKQGANATLDALNESLNRLKKESTKIIHHYAHSKELAPYLVDTQSHLKHGYECLLLKSGFSSAIKGVVLERSANGYFYLLPESAQKIAQKIAQIGNEIDCCIVEMCQTLSRSLQKHLLFLKFLFKEFDFLDSLQARLNFAKAYNLEFVMPSFTQKKMILENFSHPILKEPKPLNLKFEKSMLAVTGVNAGGKTMLLKSLLSAAFLSKHLIPMKINAHHSTIPYFREIHAIINDPQNSANNISTFAGRMKQFSALLSKENMLLGVDEIELGTDADEASSLYKTLLEKLLKQNNQIVITTHHKRLSVLMAENKEVELLAALYDEEKERPTYTFLKGVIGKSYAFETALRYGVPPFLIEKAKAFYGEDKEKLNVLIENSSTLERELKQKNEHLENALKEQEDLKNAWLLEMEKQKEIFHHKKLELEKSYQQALNILKSEVASKDTSSMHKEIHKASEILNKHKTDQEIPQIITSFQINEKARYKNESVLVIQILDKGYYLVETELGMRLKAHGSWLKQIQKPPKNKFKPPKTIVPKPKEASLRLDLRGQRSEEALDLLDAFLNDALLGGFEEVLICHGKGSGILEKFVKEFLKNHPKVVSFSDAPINLGGSGVKIVKL</sequence>
<name>MUTS2_HELPJ</name>
<keyword id="KW-0067">ATP-binding</keyword>
<keyword id="KW-0238">DNA-binding</keyword>
<keyword id="KW-0255">Endonuclease</keyword>
<keyword id="KW-0378">Hydrolase</keyword>
<keyword id="KW-0540">Nuclease</keyword>
<keyword id="KW-0547">Nucleotide-binding</keyword>
<keyword id="KW-0694">RNA-binding</keyword>
<keyword id="KW-0699">rRNA-binding</keyword>
<proteinExistence type="inferred from homology"/>